<protein>
    <recommendedName>
        <fullName evidence="1">HTH-type transcriptional regulator MntR</fullName>
    </recommendedName>
    <alternativeName>
        <fullName evidence="1">Manganese transport regulator</fullName>
    </alternativeName>
</protein>
<name>MNTR_BACAA</name>
<keyword id="KW-0010">Activator</keyword>
<keyword id="KW-0963">Cytoplasm</keyword>
<keyword id="KW-0238">DNA-binding</keyword>
<keyword id="KW-0464">Manganese</keyword>
<keyword id="KW-0479">Metal-binding</keyword>
<keyword id="KW-0678">Repressor</keyword>
<keyword id="KW-0804">Transcription</keyword>
<keyword id="KW-0805">Transcription regulation</keyword>
<dbReference type="EMBL" id="CP001598">
    <property type="protein sequence ID" value="ACQ49079.1"/>
    <property type="molecule type" value="Genomic_DNA"/>
</dbReference>
<dbReference type="RefSeq" id="WP_001143076.1">
    <property type="nucleotide sequence ID" value="NC_012659.1"/>
</dbReference>
<dbReference type="SMR" id="C3P8B4"/>
<dbReference type="GeneID" id="75087347"/>
<dbReference type="KEGG" id="bai:BAA_4444"/>
<dbReference type="HOGENOM" id="CLU_069532_3_0_9"/>
<dbReference type="GO" id="GO:0005737">
    <property type="term" value="C:cytoplasm"/>
    <property type="evidence" value="ECO:0007669"/>
    <property type="project" value="UniProtKB-SubCell"/>
</dbReference>
<dbReference type="GO" id="GO:0003677">
    <property type="term" value="F:DNA binding"/>
    <property type="evidence" value="ECO:0007669"/>
    <property type="project" value="UniProtKB-KW"/>
</dbReference>
<dbReference type="GO" id="GO:0003700">
    <property type="term" value="F:DNA-binding transcription factor activity"/>
    <property type="evidence" value="ECO:0007669"/>
    <property type="project" value="UniProtKB-UniRule"/>
</dbReference>
<dbReference type="GO" id="GO:0030145">
    <property type="term" value="F:manganese ion binding"/>
    <property type="evidence" value="ECO:0007669"/>
    <property type="project" value="UniProtKB-UniRule"/>
</dbReference>
<dbReference type="GO" id="GO:0046983">
    <property type="term" value="F:protein dimerization activity"/>
    <property type="evidence" value="ECO:0007669"/>
    <property type="project" value="InterPro"/>
</dbReference>
<dbReference type="GO" id="GO:0030026">
    <property type="term" value="P:intracellular manganese ion homeostasis"/>
    <property type="evidence" value="ECO:0007669"/>
    <property type="project" value="UniProtKB-UniRule"/>
</dbReference>
<dbReference type="FunFam" id="1.10.10.10:FF:000189">
    <property type="entry name" value="HTH-type transcriptional regulator MntR"/>
    <property type="match status" value="1"/>
</dbReference>
<dbReference type="FunFam" id="1.10.60.10:FF:000003">
    <property type="entry name" value="HTH-type transcriptional regulator MntR"/>
    <property type="match status" value="1"/>
</dbReference>
<dbReference type="Gene3D" id="1.10.60.10">
    <property type="entry name" value="Iron dependent repressor, metal binding and dimerisation domain"/>
    <property type="match status" value="1"/>
</dbReference>
<dbReference type="Gene3D" id="1.10.10.10">
    <property type="entry name" value="Winged helix-like DNA-binding domain superfamily/Winged helix DNA-binding domain"/>
    <property type="match status" value="1"/>
</dbReference>
<dbReference type="HAMAP" id="MF_00732">
    <property type="entry name" value="HTH_MntR"/>
    <property type="match status" value="1"/>
</dbReference>
<dbReference type="InterPro" id="IPR050536">
    <property type="entry name" value="DtxR_MntR_Metal-Reg"/>
</dbReference>
<dbReference type="InterPro" id="IPR001367">
    <property type="entry name" value="Fe_dep_repressor"/>
</dbReference>
<dbReference type="InterPro" id="IPR036421">
    <property type="entry name" value="Fe_dep_repressor_sf"/>
</dbReference>
<dbReference type="InterPro" id="IPR022687">
    <property type="entry name" value="HTH_DTXR"/>
</dbReference>
<dbReference type="InterPro" id="IPR022897">
    <property type="entry name" value="HTH_tscrpt_reg_MntR"/>
</dbReference>
<dbReference type="InterPro" id="IPR022689">
    <property type="entry name" value="Iron_dep_repressor"/>
</dbReference>
<dbReference type="InterPro" id="IPR036388">
    <property type="entry name" value="WH-like_DNA-bd_sf"/>
</dbReference>
<dbReference type="InterPro" id="IPR036390">
    <property type="entry name" value="WH_DNA-bd_sf"/>
</dbReference>
<dbReference type="NCBIfam" id="NF003025">
    <property type="entry name" value="PRK03902.1"/>
    <property type="match status" value="1"/>
</dbReference>
<dbReference type="PANTHER" id="PTHR33238">
    <property type="entry name" value="IRON (METAL) DEPENDENT REPRESSOR, DTXR FAMILY"/>
    <property type="match status" value="1"/>
</dbReference>
<dbReference type="PANTHER" id="PTHR33238:SF11">
    <property type="entry name" value="TRANSCRIPTIONAL REGULATOR MNTR"/>
    <property type="match status" value="1"/>
</dbReference>
<dbReference type="Pfam" id="PF02742">
    <property type="entry name" value="Fe_dep_repr_C"/>
    <property type="match status" value="1"/>
</dbReference>
<dbReference type="Pfam" id="PF01325">
    <property type="entry name" value="Fe_dep_repress"/>
    <property type="match status" value="1"/>
</dbReference>
<dbReference type="SMART" id="SM00529">
    <property type="entry name" value="HTH_DTXR"/>
    <property type="match status" value="1"/>
</dbReference>
<dbReference type="SUPFAM" id="SSF47979">
    <property type="entry name" value="Iron-dependent repressor protein, dimerization domain"/>
    <property type="match status" value="1"/>
</dbReference>
<dbReference type="SUPFAM" id="SSF46785">
    <property type="entry name" value="Winged helix' DNA-binding domain"/>
    <property type="match status" value="1"/>
</dbReference>
<dbReference type="PROSITE" id="PS50944">
    <property type="entry name" value="HTH_DTXR"/>
    <property type="match status" value="1"/>
</dbReference>
<comment type="function">
    <text evidence="1">Central regulator of manganese homeostasis.</text>
</comment>
<comment type="activity regulation">
    <text evidence="1">DNA binding is strongly activated by Mn(2+).</text>
</comment>
<comment type="subunit">
    <text evidence="1">Homodimer.</text>
</comment>
<comment type="subcellular location">
    <subcellularLocation>
        <location evidence="1">Cytoplasm</location>
    </subcellularLocation>
</comment>
<comment type="similarity">
    <text evidence="1">Belongs to the DtxR/MntR family.</text>
</comment>
<reference key="1">
    <citation type="submission" date="2009-04" db="EMBL/GenBank/DDBJ databases">
        <title>Genome sequence of Bacillus anthracis A0248.</title>
        <authorList>
            <person name="Dodson R.J."/>
            <person name="Munk A.C."/>
            <person name="Bruce D."/>
            <person name="Detter C."/>
            <person name="Tapia R."/>
            <person name="Sutton G."/>
            <person name="Sims D."/>
            <person name="Brettin T."/>
        </authorList>
    </citation>
    <scope>NUCLEOTIDE SEQUENCE [LARGE SCALE GENOMIC DNA]</scope>
    <source>
        <strain>A0248</strain>
    </source>
</reference>
<feature type="chain" id="PRO_1000190477" description="HTH-type transcriptional regulator MntR">
    <location>
        <begin position="1"/>
        <end position="142"/>
    </location>
</feature>
<feature type="domain" description="HTH dtxR-type" evidence="1">
    <location>
        <begin position="1"/>
        <end position="63"/>
    </location>
</feature>
<feature type="binding site" evidence="1">
    <location>
        <position position="8"/>
    </location>
    <ligand>
        <name>Mn(2+)</name>
        <dbReference type="ChEBI" id="CHEBI:29035"/>
        <label>1</label>
    </ligand>
</feature>
<feature type="binding site" evidence="1">
    <location>
        <position position="11"/>
    </location>
    <ligand>
        <name>Mn(2+)</name>
        <dbReference type="ChEBI" id="CHEBI:29035"/>
        <label>2</label>
    </ligand>
</feature>
<feature type="binding site" evidence="1">
    <location>
        <position position="77"/>
    </location>
    <ligand>
        <name>Mn(2+)</name>
        <dbReference type="ChEBI" id="CHEBI:29035"/>
        <label>2</label>
    </ligand>
</feature>
<feature type="binding site" evidence="1">
    <location>
        <position position="99"/>
    </location>
    <ligand>
        <name>Mn(2+)</name>
        <dbReference type="ChEBI" id="CHEBI:29035"/>
        <label>1</label>
    </ligand>
</feature>
<feature type="binding site" evidence="1">
    <location>
        <position position="99"/>
    </location>
    <ligand>
        <name>Mn(2+)</name>
        <dbReference type="ChEBI" id="CHEBI:29035"/>
        <label>2</label>
    </ligand>
</feature>
<feature type="binding site" evidence="1">
    <location>
        <position position="102"/>
    </location>
    <ligand>
        <name>Mn(2+)</name>
        <dbReference type="ChEBI" id="CHEBI:29035"/>
        <label>1</label>
    </ligand>
</feature>
<feature type="binding site" evidence="1">
    <location>
        <position position="102"/>
    </location>
    <ligand>
        <name>Mn(2+)</name>
        <dbReference type="ChEBI" id="CHEBI:29035"/>
        <label>2</label>
    </ligand>
</feature>
<feature type="binding site" evidence="1">
    <location>
        <position position="103"/>
    </location>
    <ligand>
        <name>Mn(2+)</name>
        <dbReference type="ChEBI" id="CHEBI:29035"/>
        <label>1</label>
    </ligand>
</feature>
<evidence type="ECO:0000255" key="1">
    <source>
        <dbReference type="HAMAP-Rule" id="MF_00732"/>
    </source>
</evidence>
<organism>
    <name type="scientific">Bacillus anthracis (strain A0248)</name>
    <dbReference type="NCBI Taxonomy" id="592021"/>
    <lineage>
        <taxon>Bacteria</taxon>
        <taxon>Bacillati</taxon>
        <taxon>Bacillota</taxon>
        <taxon>Bacilli</taxon>
        <taxon>Bacillales</taxon>
        <taxon>Bacillaceae</taxon>
        <taxon>Bacillus</taxon>
        <taxon>Bacillus cereus group</taxon>
    </lineage>
</organism>
<gene>
    <name evidence="1" type="primary">mntR</name>
    <name type="ordered locus">BAA_4444</name>
</gene>
<proteinExistence type="inferred from homology"/>
<accession>C3P8B4</accession>
<sequence length="142" mass="16596">MPTPSMEDYIEQIYLLIDEKGYARVSDIAEALSVHPSSVTKMVQKLDKDEYLIYEKYRGLVLTSKGKKIGERLVYRHELLEQFMRIIGVDESKIYNDVEGIEHHLSWEAIDRIGDLVQYFEQDEVRVETLRGVQKANEEKSN</sequence>